<reference key="1">
    <citation type="submission" date="2006-08" db="EMBL/GenBank/DDBJ databases">
        <authorList>
            <consortium name="NIH - Mammalian Gene Collection (MGC) project"/>
        </authorList>
    </citation>
    <scope>NUCLEOTIDE SEQUENCE [LARGE SCALE MRNA]</scope>
    <source>
        <strain>Hereford</strain>
        <tissue>Thalamus</tissue>
    </source>
</reference>
<name>BANP_BOVIN</name>
<accession>Q0VCW3</accession>
<dbReference type="EMBL" id="BC119967">
    <property type="protein sequence ID" value="AAI19968.1"/>
    <property type="molecule type" value="mRNA"/>
</dbReference>
<dbReference type="RefSeq" id="NP_001069088.1">
    <property type="nucleotide sequence ID" value="NM_001075620.1"/>
</dbReference>
<dbReference type="SMR" id="Q0VCW3"/>
<dbReference type="FunCoup" id="Q0VCW3">
    <property type="interactions" value="2420"/>
</dbReference>
<dbReference type="STRING" id="9913.ENSBTAP00000073776"/>
<dbReference type="PaxDb" id="9913-ENSBTAP00000032458"/>
<dbReference type="GeneID" id="513446"/>
<dbReference type="KEGG" id="bta:513446"/>
<dbReference type="CTD" id="54971"/>
<dbReference type="eggNOG" id="ENOG502QRIF">
    <property type="taxonomic scope" value="Eukaryota"/>
</dbReference>
<dbReference type="InParanoid" id="Q0VCW3"/>
<dbReference type="OrthoDB" id="10052653at2759"/>
<dbReference type="Proteomes" id="UP000009136">
    <property type="component" value="Unplaced"/>
</dbReference>
<dbReference type="GO" id="GO:0005737">
    <property type="term" value="C:cytoplasm"/>
    <property type="evidence" value="ECO:0007669"/>
    <property type="project" value="UniProtKB-SubCell"/>
</dbReference>
<dbReference type="GO" id="GO:0016607">
    <property type="term" value="C:nuclear speck"/>
    <property type="evidence" value="ECO:0007669"/>
    <property type="project" value="UniProtKB-SubCell"/>
</dbReference>
<dbReference type="GO" id="GO:0003677">
    <property type="term" value="F:DNA binding"/>
    <property type="evidence" value="ECO:0007669"/>
    <property type="project" value="UniProtKB-KW"/>
</dbReference>
<dbReference type="GO" id="GO:0006325">
    <property type="term" value="P:chromatin organization"/>
    <property type="evidence" value="ECO:0007669"/>
    <property type="project" value="UniProtKB-KW"/>
</dbReference>
<dbReference type="FunFam" id="1.10.10.2590:FF:000001">
    <property type="entry name" value="protein BANP isoform X1"/>
    <property type="match status" value="1"/>
</dbReference>
<dbReference type="Gene3D" id="1.10.10.2590">
    <property type="entry name" value="BEN domain"/>
    <property type="match status" value="1"/>
</dbReference>
<dbReference type="InterPro" id="IPR042343">
    <property type="entry name" value="BANP"/>
</dbReference>
<dbReference type="InterPro" id="IPR018379">
    <property type="entry name" value="BEN_domain"/>
</dbReference>
<dbReference type="PANTHER" id="PTHR16243">
    <property type="entry name" value="BTG3-ASSOCIATED NUCLEAR PROTEIN BANP"/>
    <property type="match status" value="1"/>
</dbReference>
<dbReference type="PANTHER" id="PTHR16243:SF2">
    <property type="entry name" value="PROTEIN BANP"/>
    <property type="match status" value="1"/>
</dbReference>
<dbReference type="Pfam" id="PF10523">
    <property type="entry name" value="BEN"/>
    <property type="match status" value="1"/>
</dbReference>
<dbReference type="SMART" id="SM01025">
    <property type="entry name" value="BEN"/>
    <property type="match status" value="1"/>
</dbReference>
<dbReference type="PROSITE" id="PS51457">
    <property type="entry name" value="BEN"/>
    <property type="match status" value="1"/>
</dbReference>
<evidence type="ECO:0000250" key="1"/>
<evidence type="ECO:0000250" key="2">
    <source>
        <dbReference type="UniProtKB" id="Q8N9N5"/>
    </source>
</evidence>
<evidence type="ECO:0000250" key="3">
    <source>
        <dbReference type="UniProtKB" id="Q8VBU8"/>
    </source>
</evidence>
<evidence type="ECO:0000255" key="4"/>
<evidence type="ECO:0000255" key="5">
    <source>
        <dbReference type="PROSITE-ProRule" id="PRU00784"/>
    </source>
</evidence>
<evidence type="ECO:0000256" key="6">
    <source>
        <dbReference type="SAM" id="MobiDB-lite"/>
    </source>
</evidence>
<evidence type="ECO:0000305" key="7"/>
<gene>
    <name type="primary">BANP</name>
</gene>
<comment type="function">
    <text evidence="2 3">Controls V(D)J recombination during T-cell development by repressing T-cell receptor (TCR) beta enhancer function. Binds to scaffold/matrix attachment region beta (S/MARbeta), an ATC-rich DNA sequence located upstream of the TCR beta enhancer. Represses cyclin D1 transcription by recruiting HDAC1 to its promoter, thereby diminishing H3K9ac, H3S10ph and H4K8ac levels. Promotes TP53 activation, which causes cell cycle arrest. Plays a role in the regulation of alternative splicing. Binds to CD44 pre-mRNA and negatively regulates the inclusion of CD44 proximal variable exons v2-v6 but has no effect on distal variable exons v7-v10.</text>
</comment>
<comment type="subunit">
    <text evidence="2 3">Part of a corepressor complex containing BANP, HDAC1, SIN3A, SIN3B, RBL1 and RBL2 (By similarity). Forms a trimeric complex in the nucleus consisting of BANP, HDAC6 and KHDRBS1/SAM68; HDAC6 keeps KHDRBS1 in a deacetylated state which inhibits the inclusion of CD44 alternate exons (By similarity). The complex is disrupted by MAPK1/MAPK3-mediated phosphorylation of BANP which results in BANP export to the cytoplasm (By similarity). This facilitates acetylation of KHDRBS1 and CD44 variant exon inclusion (By similarity). Interacts with TP53 (By similarity). Interacts with CUX1/CDP (By similarity). Interacts with HDAC1 (By similarity).</text>
</comment>
<comment type="subcellular location">
    <subcellularLocation>
        <location evidence="2">Nucleus</location>
    </subcellularLocation>
    <subcellularLocation>
        <location evidence="2">Nucleus speckle</location>
    </subcellularLocation>
    <subcellularLocation>
        <location evidence="2">Cytoplasm</location>
    </subcellularLocation>
    <text evidence="2">Primarily nuclear but translocates to the cytoplasm following MAPK1/MAPK3-mediated phosphorylation.</text>
</comment>
<comment type="PTM">
    <text evidence="3">MAPK1/MAPK3-mediated phosphorylation at Thr-345 and Thr-360 results in export to the cytoplasm.</text>
</comment>
<comment type="similarity">
    <text evidence="7">Belongs to the BANP/SMAR1 family.</text>
</comment>
<feature type="chain" id="PRO_0000297909" description="Protein BANP">
    <location>
        <begin position="1"/>
        <end position="503"/>
    </location>
</feature>
<feature type="domain" description="BEN" evidence="5">
    <location>
        <begin position="234"/>
        <end position="330"/>
    </location>
</feature>
<feature type="region of interest" description="Interaction with CUX1 and HDAC1" evidence="1">
    <location>
        <begin position="160"/>
        <end position="350"/>
    </location>
</feature>
<feature type="region of interest" description="Disordered" evidence="6">
    <location>
        <begin position="174"/>
        <end position="203"/>
    </location>
</feature>
<feature type="region of interest" description="Disordered" evidence="6">
    <location>
        <begin position="335"/>
        <end position="371"/>
    </location>
</feature>
<feature type="region of interest" description="DNA-binding" evidence="1">
    <location>
        <begin position="350"/>
        <end position="399"/>
    </location>
</feature>
<feature type="coiled-coil region" evidence="4">
    <location>
        <begin position="65"/>
        <end position="98"/>
    </location>
</feature>
<feature type="compositionally biased region" description="Low complexity" evidence="6">
    <location>
        <begin position="343"/>
        <end position="359"/>
    </location>
</feature>
<feature type="compositionally biased region" description="Pro residues" evidence="6">
    <location>
        <begin position="360"/>
        <end position="371"/>
    </location>
</feature>
<feature type="modified residue" description="Phosphoserine" evidence="2">
    <location>
        <position position="19"/>
    </location>
</feature>
<feature type="modified residue" description="Phosphoserine" evidence="2">
    <location>
        <position position="98"/>
    </location>
</feature>
<feature type="modified residue" description="Phosphoserine" evidence="2">
    <location>
        <position position="108"/>
    </location>
</feature>
<feature type="modified residue" description="N6-acetyllysine" evidence="3">
    <location>
        <position position="283"/>
    </location>
</feature>
<feature type="modified residue" description="Phosphothreonine" evidence="3">
    <location>
        <position position="345"/>
    </location>
</feature>
<feature type="modified residue" description="Phosphoserine" evidence="3">
    <location>
        <position position="347"/>
    </location>
</feature>
<feature type="modified residue" description="Phosphothreonine" evidence="3">
    <location>
        <position position="360"/>
    </location>
</feature>
<feature type="cross-link" description="Glycyl lysine isopeptide (Lys-Gly) (interchain with G-Cter in SUMO2)" evidence="2">
    <location>
        <position position="141"/>
    </location>
</feature>
<organism>
    <name type="scientific">Bos taurus</name>
    <name type="common">Bovine</name>
    <dbReference type="NCBI Taxonomy" id="9913"/>
    <lineage>
        <taxon>Eukaryota</taxon>
        <taxon>Metazoa</taxon>
        <taxon>Chordata</taxon>
        <taxon>Craniata</taxon>
        <taxon>Vertebrata</taxon>
        <taxon>Euteleostomi</taxon>
        <taxon>Mammalia</taxon>
        <taxon>Eutheria</taxon>
        <taxon>Laurasiatheria</taxon>
        <taxon>Artiodactyla</taxon>
        <taxon>Ruminantia</taxon>
        <taxon>Pecora</taxon>
        <taxon>Bovidae</taxon>
        <taxon>Bovinae</taxon>
        <taxon>Bos</taxon>
    </lineage>
</organism>
<sequence>MMSEQDLADVVQIAVEELSPGHPVVLENHVVTDEDEPALKRQRLEINCQDPSIKSFLYSINQTICLRLDSIEAKLQALEATCKSLEEKLDLVTNKQHSPIQVPMVAGSPLGATQTCNKVRCVVPQTTVILNSDRQNAVVAKMEDPLSGRAPEPLENVISNAVPGRRQNTIVVKVPGQEDSHNEDGESGSEASDSVSNCGQSGSQNIGNNVTLITLNSEEDYPNGTWLGDENNPEMRVRCAIIPSDMLHISTNCRTAEKMALTLLDYLFHREVQAVSNLSGQGKHGKKQLDPLTIYGIRCHLFYKFGITESDWYRIKQSIDSKCRTAWRRKQRGQSLAVKSFSRRTPSSSSYGASETMMSTPPPSSELQQPPPQALHYALANAQQVQIHQIGEDGQVQVGHLHIAQVPQGEQVQITQDSEGNLQIHHVGQDGQVLQGAQLIAVASSDPAATGVDGSPLQGSDIQVQYVQLAPVTDHTAAAQAADALQPTLQPEMQLEHGAIQIQ</sequence>
<keyword id="KW-0007">Acetylation</keyword>
<keyword id="KW-0131">Cell cycle</keyword>
<keyword id="KW-0156">Chromatin regulator</keyword>
<keyword id="KW-0175">Coiled coil</keyword>
<keyword id="KW-0963">Cytoplasm</keyword>
<keyword id="KW-0217">Developmental protein</keyword>
<keyword id="KW-0238">DNA-binding</keyword>
<keyword id="KW-1017">Isopeptide bond</keyword>
<keyword id="KW-0539">Nucleus</keyword>
<keyword id="KW-0597">Phosphoprotein</keyword>
<keyword id="KW-1185">Reference proteome</keyword>
<keyword id="KW-0678">Repressor</keyword>
<keyword id="KW-0694">RNA-binding</keyword>
<keyword id="KW-0804">Transcription</keyword>
<keyword id="KW-0805">Transcription regulation</keyword>
<keyword id="KW-0832">Ubl conjugation</keyword>
<protein>
    <recommendedName>
        <fullName>Protein BANP</fullName>
    </recommendedName>
</protein>
<proteinExistence type="evidence at transcript level"/>